<evidence type="ECO:0000255" key="1"/>
<evidence type="ECO:0000255" key="2">
    <source>
        <dbReference type="PROSITE-ProRule" id="PRU00114"/>
    </source>
</evidence>
<evidence type="ECO:0000303" key="3">
    <source>
    </source>
</evidence>
<evidence type="ECO:0000303" key="4">
    <source>
    </source>
</evidence>
<evidence type="ECO:0000303" key="5">
    <source>
    </source>
</evidence>
<evidence type="ECO:0000303" key="6">
    <source>
    </source>
</evidence>
<evidence type="ECO:0000303" key="7">
    <source>
    </source>
</evidence>
<evidence type="ECO:0000303" key="8">
    <source ref="2"/>
</evidence>
<evidence type="ECO:0000305" key="9"/>
<reference key="1">
    <citation type="journal article" date="2003" name="Nature">
        <title>The DNA sequence and analysis of human chromosome 14.</title>
        <authorList>
            <person name="Heilig R."/>
            <person name="Eckenberg R."/>
            <person name="Petit J.-L."/>
            <person name="Fonknechten N."/>
            <person name="Da Silva C."/>
            <person name="Cattolico L."/>
            <person name="Levy M."/>
            <person name="Barbe V."/>
            <person name="De Berardinis V."/>
            <person name="Ureta-Vidal A."/>
            <person name="Pelletier E."/>
            <person name="Vico V."/>
            <person name="Anthouard V."/>
            <person name="Rowen L."/>
            <person name="Madan A."/>
            <person name="Qin S."/>
            <person name="Sun H."/>
            <person name="Du H."/>
            <person name="Pepin K."/>
            <person name="Artiguenave F."/>
            <person name="Robert C."/>
            <person name="Cruaud C."/>
            <person name="Bruels T."/>
            <person name="Jaillon O."/>
            <person name="Friedlander L."/>
            <person name="Samson G."/>
            <person name="Brottier P."/>
            <person name="Cure S."/>
            <person name="Segurens B."/>
            <person name="Aniere F."/>
            <person name="Samain S."/>
            <person name="Crespeau H."/>
            <person name="Abbasi N."/>
            <person name="Aiach N."/>
            <person name="Boscus D."/>
            <person name="Dickhoff R."/>
            <person name="Dors M."/>
            <person name="Dubois I."/>
            <person name="Friedman C."/>
            <person name="Gouyvenoux M."/>
            <person name="James R."/>
            <person name="Madan A."/>
            <person name="Mairey-Estrada B."/>
            <person name="Mangenot S."/>
            <person name="Martins N."/>
            <person name="Menard M."/>
            <person name="Oztas S."/>
            <person name="Ratcliffe A."/>
            <person name="Shaffer T."/>
            <person name="Trask B."/>
            <person name="Vacherie B."/>
            <person name="Bellemere C."/>
            <person name="Belser C."/>
            <person name="Besnard-Gonnet M."/>
            <person name="Bartol-Mavel D."/>
            <person name="Boutard M."/>
            <person name="Briez-Silla S."/>
            <person name="Combette S."/>
            <person name="Dufosse-Laurent V."/>
            <person name="Ferron C."/>
            <person name="Lechaplais C."/>
            <person name="Louesse C."/>
            <person name="Muselet D."/>
            <person name="Magdelenat G."/>
            <person name="Pateau E."/>
            <person name="Petit E."/>
            <person name="Sirvain-Trukniewicz P."/>
            <person name="Trybou A."/>
            <person name="Vega-Czarny N."/>
            <person name="Bataille E."/>
            <person name="Bluet E."/>
            <person name="Bordelais I."/>
            <person name="Dubois M."/>
            <person name="Dumont C."/>
            <person name="Guerin T."/>
            <person name="Haffray S."/>
            <person name="Hammadi R."/>
            <person name="Muanga J."/>
            <person name="Pellouin V."/>
            <person name="Robert D."/>
            <person name="Wunderle E."/>
            <person name="Gauguet G."/>
            <person name="Roy A."/>
            <person name="Sainte-Marthe L."/>
            <person name="Verdier J."/>
            <person name="Verdier-Discala C."/>
            <person name="Hillier L.W."/>
            <person name="Fulton L."/>
            <person name="McPherson J."/>
            <person name="Matsuda F."/>
            <person name="Wilson R."/>
            <person name="Scarpelli C."/>
            <person name="Gyapay G."/>
            <person name="Wincker P."/>
            <person name="Saurin W."/>
            <person name="Quetier F."/>
            <person name="Waterston R."/>
            <person name="Hood L."/>
            <person name="Weissenbach J."/>
        </authorList>
    </citation>
    <scope>NUCLEOTIDE SEQUENCE [LARGE SCALE GENOMIC DNA] (IMGT ALLELE TRAV12-1*01)</scope>
</reference>
<reference key="2">
    <citation type="book" date="2001" name="The T Cell Receptor FactsBook.">
        <title>The T Cell Receptor FactsBook.</title>
        <editorList>
            <person name="Lefranc M.P."/>
            <person name="Lefranc G."/>
        </editorList>
        <authorList>
            <person name="Lefranc M.P."/>
            <person name="Lefranc G."/>
        </authorList>
    </citation>
    <scope>NOMENCLATURE</scope>
</reference>
<reference key="3">
    <citation type="journal article" date="2004" name="Nat. Rev. Immunol.">
        <title>The many important facets of T-cell repertoire diversity.</title>
        <authorList>
            <person name="Nikolich-Zugich J."/>
            <person name="Slifka M.K."/>
            <person name="Messaoudi I."/>
        </authorList>
    </citation>
    <scope>REVIEW ON T CELL REPERTOIRE DIVERSITY</scope>
</reference>
<reference key="4">
    <citation type="journal article" date="2010" name="Cold Spring Harb. Perspect. Biol.">
        <title>Structural biology of the T-cell receptor: insights into receptor assembly, ligand recognition, and initiation of signaling.</title>
        <authorList>
            <person name="Wucherpfennig K.W."/>
            <person name="Gagnon E."/>
            <person name="Call M.J."/>
            <person name="Huseby E.S."/>
            <person name="Call M.E."/>
        </authorList>
    </citation>
    <scope>REVIEW ON T CELL RECEPTOR-CD3 COMPLEX ASSEMBLY</scope>
    <scope>SUBCELLULAR LOCATION</scope>
</reference>
<reference key="5">
    <citation type="journal article" date="2013" name="Nat. Rev. Immunol.">
        <title>T cell receptor signalling networks: branched, diversified and bounded.</title>
        <authorList>
            <person name="Brownlie R.J."/>
            <person name="Zamoyska R."/>
        </authorList>
    </citation>
    <scope>REVIEW ON T CELL RECEPTOR SIGNALING</scope>
</reference>
<reference key="6">
    <citation type="journal article" date="2014" name="Front. Immunol.">
        <title>Immunoglobulin and T Cell Receptor Genes: IMGT((R)) and the Birth and Rise of Immunoinformatics.</title>
        <authorList>
            <person name="Lefranc M.P."/>
        </authorList>
    </citation>
    <scope>NOMENCLATURE</scope>
</reference>
<reference key="7">
    <citation type="journal article" date="2015" name="Annu. Rev. Immunol.">
        <title>T cell antigen receptor recognition of antigen-presenting molecules.</title>
        <authorList>
            <person name="Rossjohn J."/>
            <person name="Gras S."/>
            <person name="Miles J.J."/>
            <person name="Turner S.J."/>
            <person name="Godfrey D.I."/>
            <person name="McCluskey J."/>
        </authorList>
    </citation>
    <scope>REVIEW ON FUNCTION</scope>
</reference>
<feature type="signal peptide" evidence="1">
    <location>
        <begin position="1"/>
        <end position="20"/>
    </location>
</feature>
<feature type="chain" id="PRO_0000443264" description="T cell receptor alpha variable 12-1" evidence="1">
    <location>
        <begin position="21"/>
        <end position="112"/>
    </location>
</feature>
<feature type="domain" description="Ig-like" evidence="2">
    <location>
        <begin position="23"/>
        <end position="112" status="greater than"/>
    </location>
</feature>
<feature type="glycosylation site" description="N-linked (GlcNAc...) asparagine" evidence="1">
    <location>
        <position position="43"/>
    </location>
</feature>
<feature type="disulfide bond" evidence="2">
    <location>
        <begin position="44"/>
        <end position="109"/>
    </location>
</feature>
<feature type="non-terminal residue">
    <location>
        <position position="112"/>
    </location>
</feature>
<accession>A0A0B4J245</accession>
<dbReference type="EMBL" id="AC243980">
    <property type="status" value="NOT_ANNOTATED_CDS"/>
    <property type="molecule type" value="Genomic_DNA"/>
</dbReference>
<dbReference type="SMR" id="A0A0B4J245"/>
<dbReference type="FunCoup" id="A0A0B4J245">
    <property type="interactions" value="330"/>
</dbReference>
<dbReference type="IMGT_GENE-DB" id="TRAV12-1"/>
<dbReference type="GlyCosmos" id="A0A0B4J245">
    <property type="glycosylation" value="1 site, No reported glycans"/>
</dbReference>
<dbReference type="GlyGen" id="A0A0B4J245">
    <property type="glycosylation" value="1 site"/>
</dbReference>
<dbReference type="BioMuta" id="TRAV12-1"/>
<dbReference type="Ensembl" id="ENST00000390433.1">
    <property type="protein sequence ID" value="ENSP00000445405.1"/>
    <property type="gene ID" value="ENSG00000211785.1"/>
</dbReference>
<dbReference type="AGR" id="HGNC:12105"/>
<dbReference type="GeneCards" id="TRAV12-1"/>
<dbReference type="HGNC" id="HGNC:12105">
    <property type="gene designation" value="TRAV12-1"/>
</dbReference>
<dbReference type="HPA" id="ENSG00000211785">
    <property type="expression patterns" value="Tissue enriched (lymphoid)"/>
</dbReference>
<dbReference type="neXtProt" id="NX_A0A0B4J245"/>
<dbReference type="OpenTargets" id="ENSG00000211785"/>
<dbReference type="VEuPathDB" id="HostDB:ENSG00000211785"/>
<dbReference type="GeneTree" id="ENSGT00940000153130"/>
<dbReference type="HOGENOM" id="CLU_077975_8_3_1"/>
<dbReference type="InParanoid" id="A0A0B4J245"/>
<dbReference type="OMA" id="QYFFWYR"/>
<dbReference type="OrthoDB" id="9631130at2759"/>
<dbReference type="PAN-GO" id="A0A0B4J245">
    <property type="GO annotations" value="1 GO annotation based on evolutionary models"/>
</dbReference>
<dbReference type="PhylomeDB" id="A0A0B4J245"/>
<dbReference type="SignaLink" id="A0A0B4J245"/>
<dbReference type="ChiTaRS" id="TRAV12-1">
    <property type="organism name" value="human"/>
</dbReference>
<dbReference type="Pharos" id="A0A0B4J245">
    <property type="development level" value="Tdark"/>
</dbReference>
<dbReference type="PRO" id="PR:A0A0B4J245"/>
<dbReference type="Proteomes" id="UP000005640">
    <property type="component" value="Chromosome 14"/>
</dbReference>
<dbReference type="RNAct" id="A0A0B4J245">
    <property type="molecule type" value="protein"/>
</dbReference>
<dbReference type="Bgee" id="ENSG00000211785">
    <property type="expression patterns" value="Expressed in granulocyte and 102 other cell types or tissues"/>
</dbReference>
<dbReference type="GO" id="GO:0042101">
    <property type="term" value="C:T cell receptor complex"/>
    <property type="evidence" value="ECO:0007669"/>
    <property type="project" value="UniProtKB-KW"/>
</dbReference>
<dbReference type="GO" id="GO:0042605">
    <property type="term" value="F:peptide antigen binding"/>
    <property type="evidence" value="ECO:0000318"/>
    <property type="project" value="GO_Central"/>
</dbReference>
<dbReference type="GO" id="GO:0002250">
    <property type="term" value="P:adaptive immune response"/>
    <property type="evidence" value="ECO:0007669"/>
    <property type="project" value="UniProtKB-KW"/>
</dbReference>
<dbReference type="Gene3D" id="2.60.40.10">
    <property type="entry name" value="Immunoglobulins"/>
    <property type="match status" value="1"/>
</dbReference>
<dbReference type="InterPro" id="IPR007110">
    <property type="entry name" value="Ig-like_dom"/>
</dbReference>
<dbReference type="InterPro" id="IPR036179">
    <property type="entry name" value="Ig-like_dom_sf"/>
</dbReference>
<dbReference type="InterPro" id="IPR013783">
    <property type="entry name" value="Ig-like_fold"/>
</dbReference>
<dbReference type="InterPro" id="IPR013106">
    <property type="entry name" value="Ig_V-set"/>
</dbReference>
<dbReference type="InterPro" id="IPR051006">
    <property type="entry name" value="TCR_variable_domain"/>
</dbReference>
<dbReference type="PANTHER" id="PTHR19343">
    <property type="entry name" value="T CELL RECEPTOR ALPHA VARIABLE 1-2"/>
    <property type="match status" value="1"/>
</dbReference>
<dbReference type="PANTHER" id="PTHR19343:SF18">
    <property type="entry name" value="T CELL RECEPTOR ALPHA VARIABLE 12-1"/>
    <property type="match status" value="1"/>
</dbReference>
<dbReference type="Pfam" id="PF07686">
    <property type="entry name" value="V-set"/>
    <property type="match status" value="1"/>
</dbReference>
<dbReference type="SMART" id="SM00406">
    <property type="entry name" value="IGv"/>
    <property type="match status" value="1"/>
</dbReference>
<dbReference type="SUPFAM" id="SSF48726">
    <property type="entry name" value="Immunoglobulin"/>
    <property type="match status" value="1"/>
</dbReference>
<dbReference type="PROSITE" id="PS50835">
    <property type="entry name" value="IG_LIKE"/>
    <property type="match status" value="1"/>
</dbReference>
<comment type="function">
    <text evidence="3 5 6 7">V region of the variable domain of T cell receptor (TR) alpha chain that participates in the antigen recognition (PubMed:24600447). Alpha-beta T cell receptors are antigen specific receptors which are essential to the immune response and are present on the cell surface of T lymphocytes. Recognize peptide-major histocompatibility (MH) (pMH) complexes that are displayed by antigen presenting cells (APC), a prerequisite for efficient T cell adaptive immunity against pathogens (PubMed:25493333). Binding of alpha-beta TR to pMH complex initiates TR-CD3 clustering on the cell surface and intracellular activation of LCK that phosphorylates the ITAM motifs of CD3G, CD3D, CD3E and CD247 enabling the recruitment of ZAP70. In turn ZAP70 phosphorylates LAT, which recruits numerous signaling molecules to form the LAT signalosome. The LAT signalosome propagates signal branching to three major signaling pathways, the calcium, the mitogen-activated protein kinase (MAPK) kinase and the nuclear factor NF-kappa-B (NF-kB) pathways, leading to the mobilization of transcription factors that are critical for gene expression and essential for T cell growth and differentiation (PubMed:23524462). The T cell repertoire is generated in the thymus, by V-(D)-J rearrangement. This repertoire is then shaped by intrathymic selection events to generate a peripheral T cell pool of self-MH restricted, non-autoaggressive T cells. Post-thymic interaction of alpha-beta TR with the pMH complexes shapes TR structural and functional avidity (PubMed:15040585).</text>
</comment>
<comment type="subunit">
    <text evidence="4">Alpha-beta TR is a heterodimer composed of an alpha and beta chain; disulfide-linked. The alpha-beta TR is associated with the transmembrane signaling CD3 coreceptor proteins to form the TR-CD3 (TcR or TCR). The assembly of alpha-beta TR heterodimers with CD3 occurs in the endoplasmic reticulum where a single alpha-beta TR heterodimer associates with one CD3D-CD3E heterodimer, one CD3G-CD3E heterodimer and one CD247 homodimer forming a stable octameric structure. CD3D-CD3E and CD3G-CD3E heterodimers preferentially associate with TR alpha and TR beta chains, respectively. The association of the CD247 homodimer is the last step of TcR assembly in the endoplasmic reticulum and is required for transport to the cell surface.</text>
</comment>
<comment type="subcellular location">
    <subcellularLocation>
        <location evidence="4">Cell membrane</location>
    </subcellularLocation>
</comment>
<comment type="polymorphism">
    <text evidence="9">There are several alleles. The sequence shown is that of IMGT allele TRAV12-1*01.</text>
</comment>
<keyword id="KW-1064">Adaptive immunity</keyword>
<keyword id="KW-1003">Cell membrane</keyword>
<keyword id="KW-1015">Disulfide bond</keyword>
<keyword id="KW-0325">Glycoprotein</keyword>
<keyword id="KW-0391">Immunity</keyword>
<keyword id="KW-0393">Immunoglobulin domain</keyword>
<keyword id="KW-0472">Membrane</keyword>
<keyword id="KW-1267">Proteomics identification</keyword>
<keyword id="KW-0675">Receptor</keyword>
<keyword id="KW-1185">Reference proteome</keyword>
<keyword id="KW-0732">Signal</keyword>
<keyword id="KW-1279">T cell receptor</keyword>
<gene>
    <name evidence="8" type="primary">TRAV12-1</name>
</gene>
<sequence length="112" mass="12865">MISLRVLLVILWLQLSWVWSQRKEVEQDPGPFNVPEGATVAFNCTYSNSASQSFFWYRQDCRKEPKLLMSVYSSGNEDGRFTAQLNRASQYISLLIRDSKLSDSATYLCVVN</sequence>
<protein>
    <recommendedName>
        <fullName evidence="8">T cell receptor alpha variable 12-1</fullName>
    </recommendedName>
</protein>
<organism>
    <name type="scientific">Homo sapiens</name>
    <name type="common">Human</name>
    <dbReference type="NCBI Taxonomy" id="9606"/>
    <lineage>
        <taxon>Eukaryota</taxon>
        <taxon>Metazoa</taxon>
        <taxon>Chordata</taxon>
        <taxon>Craniata</taxon>
        <taxon>Vertebrata</taxon>
        <taxon>Euteleostomi</taxon>
        <taxon>Mammalia</taxon>
        <taxon>Eutheria</taxon>
        <taxon>Euarchontoglires</taxon>
        <taxon>Primates</taxon>
        <taxon>Haplorrhini</taxon>
        <taxon>Catarrhini</taxon>
        <taxon>Hominidae</taxon>
        <taxon>Homo</taxon>
    </lineage>
</organism>
<proteinExistence type="evidence at protein level"/>
<name>TVAL1_HUMAN</name>